<evidence type="ECO:0000255" key="1">
    <source>
        <dbReference type="PROSITE-ProRule" id="PRU00120"/>
    </source>
</evidence>
<evidence type="ECO:0000256" key="2">
    <source>
        <dbReference type="SAM" id="MobiDB-lite"/>
    </source>
</evidence>
<evidence type="ECO:0000269" key="3">
    <source>
    </source>
</evidence>
<evidence type="ECO:0000303" key="4">
    <source>
    </source>
</evidence>
<evidence type="ECO:0000305" key="5"/>
<evidence type="ECO:0000312" key="6">
    <source>
        <dbReference type="EMBL" id="BAJ83776.1"/>
    </source>
</evidence>
<evidence type="ECO:0000312" key="7">
    <source>
        <dbReference type="MGI" id="MGI:2446782"/>
    </source>
</evidence>
<evidence type="ECO:0000312" key="8">
    <source>
        <dbReference type="Proteomes" id="UP000000589"/>
    </source>
</evidence>
<organism evidence="8">
    <name type="scientific">Mus musculus</name>
    <name type="common">Mouse</name>
    <dbReference type="NCBI Taxonomy" id="10090"/>
    <lineage>
        <taxon>Eukaryota</taxon>
        <taxon>Metazoa</taxon>
        <taxon>Chordata</taxon>
        <taxon>Craniata</taxon>
        <taxon>Vertebrata</taxon>
        <taxon>Euteleostomi</taxon>
        <taxon>Mammalia</taxon>
        <taxon>Eutheria</taxon>
        <taxon>Euarchontoglires</taxon>
        <taxon>Glires</taxon>
        <taxon>Rodentia</taxon>
        <taxon>Myomorpha</taxon>
        <taxon>Muroidea</taxon>
        <taxon>Muridae</taxon>
        <taxon>Murinae</taxon>
        <taxon>Mus</taxon>
        <taxon>Mus</taxon>
    </lineage>
</organism>
<feature type="chain" id="PRO_0000440991" description="Protein SSXA1">
    <location>
        <begin position="1"/>
        <end position="101"/>
    </location>
</feature>
<feature type="domain" description="KRAB-related" evidence="1">
    <location>
        <begin position="19"/>
        <end position="83"/>
    </location>
</feature>
<feature type="region of interest" description="Disordered" evidence="2">
    <location>
        <begin position="73"/>
        <end position="101"/>
    </location>
</feature>
<feature type="compositionally biased region" description="Basic and acidic residues" evidence="2">
    <location>
        <begin position="87"/>
        <end position="101"/>
    </location>
</feature>
<gene>
    <name evidence="7" type="primary">Ssxa1</name>
    <name evidence="4" type="synonym">Ssxa</name>
</gene>
<comment type="function">
    <text evidence="5">Could act as a modulator of transcription.</text>
</comment>
<comment type="subcellular location">
    <subcellularLocation>
        <location evidence="3">Nucleus</location>
    </subcellularLocation>
</comment>
<comment type="tissue specificity">
    <text evidence="3">Specifically expressed in testis (at protein level). Not detected in other tissues tested (at protein level).</text>
</comment>
<comment type="similarity">
    <text evidence="5">Belongs to the SSX family.</text>
</comment>
<name>SSXA1_MOUSE</name>
<protein>
    <recommendedName>
        <fullName evidence="5">Protein SSXA1</fullName>
    </recommendedName>
    <alternativeName>
        <fullName evidence="7">Synovial sarcoma, X member A1</fullName>
    </alternativeName>
</protein>
<keyword id="KW-0539">Nucleus</keyword>
<keyword id="KW-1185">Reference proteome</keyword>
<keyword id="KW-0804">Transcription</keyword>
<keyword id="KW-0805">Transcription regulation</keyword>
<sequence length="101" mass="11929">MKRRSHSVNLGKTKHKPEETCQAFEDISKYFSKEEWKKLSRSEKITYVYMKRNYTTMTNLGLRAHLPDFMESKERVTKSVLSDSDEVSSHESQDKRKNPVV</sequence>
<reference evidence="6" key="1">
    <citation type="journal article" date="2011" name="Int. J. Mol. Med.">
        <title>Sequence confirmation and characterization of the mouse Ssxa gene: Ssxa protein is cleaved and the N-terminal cleaved fragment translocates into the nucleus.</title>
        <authorList>
            <person name="Ichinokawa M."/>
            <person name="Miyamoto M."/>
            <person name="Tanaka K."/>
            <person name="Kyogoku N."/>
            <person name="Kuroda A."/>
            <person name="Maki T."/>
            <person name="Yamamura Y."/>
            <person name="Hirano S."/>
        </authorList>
    </citation>
    <scope>NUCLEOTIDE SEQUENCE [MRNA]</scope>
    <scope>SUBCELLULAR LOCATION</scope>
    <scope>TISSUE SPECIFICITY</scope>
    <source>
        <strain evidence="6">BALB/cJ</strain>
        <tissue evidence="6">Testis</tissue>
    </source>
</reference>
<reference evidence="8" key="2">
    <citation type="journal article" date="2009" name="PLoS Biol.">
        <title>Lineage-specific biology revealed by a finished genome assembly of the mouse.</title>
        <authorList>
            <person name="Church D.M."/>
            <person name="Goodstadt L."/>
            <person name="Hillier L.W."/>
            <person name="Zody M.C."/>
            <person name="Goldstein S."/>
            <person name="She X."/>
            <person name="Bult C.J."/>
            <person name="Agarwala R."/>
            <person name="Cherry J.L."/>
            <person name="DiCuccio M."/>
            <person name="Hlavina W."/>
            <person name="Kapustin Y."/>
            <person name="Meric P."/>
            <person name="Maglott D."/>
            <person name="Birtle Z."/>
            <person name="Marques A.C."/>
            <person name="Graves T."/>
            <person name="Zhou S."/>
            <person name="Teague B."/>
            <person name="Potamousis K."/>
            <person name="Churas C."/>
            <person name="Place M."/>
            <person name="Herschleb J."/>
            <person name="Runnheim R."/>
            <person name="Forrest D."/>
            <person name="Amos-Landgraf J."/>
            <person name="Schwartz D.C."/>
            <person name="Cheng Z."/>
            <person name="Lindblad-Toh K."/>
            <person name="Eichler E.E."/>
            <person name="Ponting C.P."/>
        </authorList>
    </citation>
    <scope>NUCLEOTIDE SEQUENCE [LARGE SCALE GENOMIC DNA]</scope>
    <source>
        <strain evidence="8">C57BL/6J</strain>
    </source>
</reference>
<proteinExistence type="evidence at protein level"/>
<dbReference type="EMBL" id="AB618486">
    <property type="protein sequence ID" value="BAJ83776.1"/>
    <property type="molecule type" value="mRNA"/>
</dbReference>
<dbReference type="EMBL" id="AL671922">
    <property type="status" value="NOT_ANNOTATED_CDS"/>
    <property type="molecule type" value="Genomic_DNA"/>
</dbReference>
<dbReference type="RefSeq" id="NP_001192015.1">
    <property type="nucleotide sequence ID" value="NM_001205086.1"/>
</dbReference>
<dbReference type="SMR" id="B1AUS7"/>
<dbReference type="FunCoup" id="B1AUS7">
    <property type="interactions" value="21"/>
</dbReference>
<dbReference type="PaxDb" id="10090-ENSMUSP00000072395"/>
<dbReference type="DNASU" id="385338"/>
<dbReference type="GeneID" id="385338"/>
<dbReference type="KEGG" id="mmu:385338"/>
<dbReference type="UCSC" id="uc009sun.1">
    <property type="organism name" value="mouse"/>
</dbReference>
<dbReference type="AGR" id="MGI:2446782"/>
<dbReference type="CTD" id="385338"/>
<dbReference type="MGI" id="MGI:2446782">
    <property type="gene designation" value="Ssxa1"/>
</dbReference>
<dbReference type="eggNOG" id="ENOG502RU1A">
    <property type="taxonomic scope" value="Eukaryota"/>
</dbReference>
<dbReference type="HOGENOM" id="CLU_168653_1_0_1"/>
<dbReference type="InParanoid" id="B1AUS7"/>
<dbReference type="OrthoDB" id="9802659at2759"/>
<dbReference type="PhylomeDB" id="B1AUS7"/>
<dbReference type="BioGRID-ORCS" id="385338">
    <property type="hits" value="0 hits in 37 CRISPR screens"/>
</dbReference>
<dbReference type="PRO" id="PR:B1AUS7"/>
<dbReference type="Proteomes" id="UP000000589">
    <property type="component" value="Unplaced"/>
</dbReference>
<dbReference type="RNAct" id="B1AUS7">
    <property type="molecule type" value="protein"/>
</dbReference>
<dbReference type="GO" id="GO:0005634">
    <property type="term" value="C:nucleus"/>
    <property type="evidence" value="ECO:0007669"/>
    <property type="project" value="UniProtKB-SubCell"/>
</dbReference>
<dbReference type="GO" id="GO:0006355">
    <property type="term" value="P:regulation of DNA-templated transcription"/>
    <property type="evidence" value="ECO:0007669"/>
    <property type="project" value="InterPro"/>
</dbReference>
<dbReference type="Gene3D" id="6.10.140.140">
    <property type="match status" value="1"/>
</dbReference>
<dbReference type="InterPro" id="IPR003655">
    <property type="entry name" value="aKRAB"/>
</dbReference>
<dbReference type="InterPro" id="IPR001909">
    <property type="entry name" value="KRAB"/>
</dbReference>
<dbReference type="InterPro" id="IPR036051">
    <property type="entry name" value="KRAB_dom_sf"/>
</dbReference>
<dbReference type="PANTHER" id="PTHR14112:SF29">
    <property type="entry name" value="PROTEIN SSXA1"/>
    <property type="match status" value="1"/>
</dbReference>
<dbReference type="PANTHER" id="PTHR14112">
    <property type="entry name" value="SYNOVIAL SARCOMA, X MEMBER"/>
    <property type="match status" value="1"/>
</dbReference>
<dbReference type="Pfam" id="PF01352">
    <property type="entry name" value="KRAB"/>
    <property type="match status" value="1"/>
</dbReference>
<dbReference type="SMART" id="SM00349">
    <property type="entry name" value="KRAB"/>
    <property type="match status" value="1"/>
</dbReference>
<dbReference type="SUPFAM" id="SSF109640">
    <property type="entry name" value="KRAB domain (Kruppel-associated box)"/>
    <property type="match status" value="1"/>
</dbReference>
<dbReference type="PROSITE" id="PS50806">
    <property type="entry name" value="KRAB_RELATED"/>
    <property type="match status" value="1"/>
</dbReference>
<accession>B1AUS7</accession>
<accession>E9RK38</accession>